<feature type="chain" id="PRO_0000323891" description="Uridylate kinase">
    <location>
        <begin position="1"/>
        <end position="251"/>
    </location>
</feature>
<feature type="binding site" evidence="1">
    <location>
        <begin position="26"/>
        <end position="29"/>
    </location>
    <ligand>
        <name>ATP</name>
        <dbReference type="ChEBI" id="CHEBI:30616"/>
    </ligand>
</feature>
<feature type="binding site" evidence="1">
    <location>
        <position position="67"/>
    </location>
    <ligand>
        <name>UMP</name>
        <dbReference type="ChEBI" id="CHEBI:57865"/>
    </ligand>
</feature>
<feature type="binding site" evidence="1">
    <location>
        <position position="68"/>
    </location>
    <ligand>
        <name>ATP</name>
        <dbReference type="ChEBI" id="CHEBI:30616"/>
    </ligand>
</feature>
<feature type="binding site" evidence="1">
    <location>
        <position position="72"/>
    </location>
    <ligand>
        <name>ATP</name>
        <dbReference type="ChEBI" id="CHEBI:30616"/>
    </ligand>
</feature>
<feature type="binding site" evidence="1">
    <location>
        <position position="87"/>
    </location>
    <ligand>
        <name>UMP</name>
        <dbReference type="ChEBI" id="CHEBI:57865"/>
    </ligand>
</feature>
<feature type="binding site" evidence="1">
    <location>
        <begin position="148"/>
        <end position="155"/>
    </location>
    <ligand>
        <name>UMP</name>
        <dbReference type="ChEBI" id="CHEBI:57865"/>
    </ligand>
</feature>
<feature type="binding site" evidence="1">
    <location>
        <position position="181"/>
    </location>
    <ligand>
        <name>ATP</name>
        <dbReference type="ChEBI" id="CHEBI:30616"/>
    </ligand>
</feature>
<feature type="binding site" evidence="1">
    <location>
        <position position="184"/>
    </location>
    <ligand>
        <name>ATP</name>
        <dbReference type="ChEBI" id="CHEBI:30616"/>
    </ligand>
</feature>
<dbReference type="EC" id="2.7.4.22" evidence="1"/>
<dbReference type="EMBL" id="CP000511">
    <property type="protein sequence ID" value="ABM13034.1"/>
    <property type="molecule type" value="Genomic_DNA"/>
</dbReference>
<dbReference type="RefSeq" id="WP_011779447.1">
    <property type="nucleotide sequence ID" value="NZ_JACKSD010000090.1"/>
</dbReference>
<dbReference type="SMR" id="A1T784"/>
<dbReference type="STRING" id="350058.Mvan_2220"/>
<dbReference type="KEGG" id="mva:Mvan_2220"/>
<dbReference type="eggNOG" id="COG0528">
    <property type="taxonomic scope" value="Bacteria"/>
</dbReference>
<dbReference type="HOGENOM" id="CLU_033861_0_0_11"/>
<dbReference type="UniPathway" id="UPA00159">
    <property type="reaction ID" value="UER00275"/>
</dbReference>
<dbReference type="Proteomes" id="UP000009159">
    <property type="component" value="Chromosome"/>
</dbReference>
<dbReference type="GO" id="GO:0005737">
    <property type="term" value="C:cytoplasm"/>
    <property type="evidence" value="ECO:0007669"/>
    <property type="project" value="UniProtKB-SubCell"/>
</dbReference>
<dbReference type="GO" id="GO:0005524">
    <property type="term" value="F:ATP binding"/>
    <property type="evidence" value="ECO:0007669"/>
    <property type="project" value="UniProtKB-KW"/>
</dbReference>
<dbReference type="GO" id="GO:0033862">
    <property type="term" value="F:UMP kinase activity"/>
    <property type="evidence" value="ECO:0007669"/>
    <property type="project" value="UniProtKB-EC"/>
</dbReference>
<dbReference type="GO" id="GO:0044210">
    <property type="term" value="P:'de novo' CTP biosynthetic process"/>
    <property type="evidence" value="ECO:0007669"/>
    <property type="project" value="UniProtKB-UniRule"/>
</dbReference>
<dbReference type="GO" id="GO:0006225">
    <property type="term" value="P:UDP biosynthetic process"/>
    <property type="evidence" value="ECO:0007669"/>
    <property type="project" value="TreeGrafter"/>
</dbReference>
<dbReference type="CDD" id="cd04254">
    <property type="entry name" value="AAK_UMPK-PyrH-Ec"/>
    <property type="match status" value="1"/>
</dbReference>
<dbReference type="FunFam" id="3.40.1160.10:FF:000001">
    <property type="entry name" value="Uridylate kinase"/>
    <property type="match status" value="1"/>
</dbReference>
<dbReference type="Gene3D" id="3.40.1160.10">
    <property type="entry name" value="Acetylglutamate kinase-like"/>
    <property type="match status" value="1"/>
</dbReference>
<dbReference type="HAMAP" id="MF_01220_B">
    <property type="entry name" value="PyrH_B"/>
    <property type="match status" value="1"/>
</dbReference>
<dbReference type="InterPro" id="IPR036393">
    <property type="entry name" value="AceGlu_kinase-like_sf"/>
</dbReference>
<dbReference type="InterPro" id="IPR001048">
    <property type="entry name" value="Asp/Glu/Uridylate_kinase"/>
</dbReference>
<dbReference type="InterPro" id="IPR011817">
    <property type="entry name" value="Uridylate_kinase"/>
</dbReference>
<dbReference type="InterPro" id="IPR015963">
    <property type="entry name" value="Uridylate_kinase_bac"/>
</dbReference>
<dbReference type="NCBIfam" id="TIGR02075">
    <property type="entry name" value="pyrH_bact"/>
    <property type="match status" value="1"/>
</dbReference>
<dbReference type="PANTHER" id="PTHR42833">
    <property type="entry name" value="URIDYLATE KINASE"/>
    <property type="match status" value="1"/>
</dbReference>
<dbReference type="PANTHER" id="PTHR42833:SF4">
    <property type="entry name" value="URIDYLATE KINASE PUMPKIN, CHLOROPLASTIC"/>
    <property type="match status" value="1"/>
</dbReference>
<dbReference type="Pfam" id="PF00696">
    <property type="entry name" value="AA_kinase"/>
    <property type="match status" value="1"/>
</dbReference>
<dbReference type="PIRSF" id="PIRSF005650">
    <property type="entry name" value="Uridylate_kin"/>
    <property type="match status" value="1"/>
</dbReference>
<dbReference type="SUPFAM" id="SSF53633">
    <property type="entry name" value="Carbamate kinase-like"/>
    <property type="match status" value="1"/>
</dbReference>
<keyword id="KW-0067">ATP-binding</keyword>
<keyword id="KW-0963">Cytoplasm</keyword>
<keyword id="KW-0418">Kinase</keyword>
<keyword id="KW-0547">Nucleotide-binding</keyword>
<keyword id="KW-0665">Pyrimidine biosynthesis</keyword>
<keyword id="KW-0808">Transferase</keyword>
<accession>A1T784</accession>
<organism>
    <name type="scientific">Mycolicibacterium vanbaalenii (strain DSM 7251 / JCM 13017 / BCRC 16820 / KCTC 9966 / NRRL B-24157 / PYR-1)</name>
    <name type="common">Mycobacterium vanbaalenii</name>
    <dbReference type="NCBI Taxonomy" id="350058"/>
    <lineage>
        <taxon>Bacteria</taxon>
        <taxon>Bacillati</taxon>
        <taxon>Actinomycetota</taxon>
        <taxon>Actinomycetes</taxon>
        <taxon>Mycobacteriales</taxon>
        <taxon>Mycobacteriaceae</taxon>
        <taxon>Mycolicibacterium</taxon>
    </lineage>
</organism>
<proteinExistence type="inferred from homology"/>
<sequence>MADPTAEPVAGQSSLIRPAYSRVLLKLGGEMFGGGQVGLDPDVVAQVARQIAEVVRSGAQVAVVIGGGNFFRGAQLQQRGMDRARSDYMGMLGTVMNSLALQDFLQKEGIDTRVQTAITMGQVAEPYIPLRAVRHLEKGRVVIFGAGMGLPYFSTDTTAAQRALEIGADVVLMAKAVDGVFTADPRVDPDAELLIAISHREVIDRGLKVADATAFSLCMDNGMPILVFNLLVDGNIARAVAGEKIGTLVTT</sequence>
<comment type="function">
    <text evidence="1">Catalyzes the reversible phosphorylation of UMP to UDP.</text>
</comment>
<comment type="catalytic activity">
    <reaction evidence="1">
        <text>UMP + ATP = UDP + ADP</text>
        <dbReference type="Rhea" id="RHEA:24400"/>
        <dbReference type="ChEBI" id="CHEBI:30616"/>
        <dbReference type="ChEBI" id="CHEBI:57865"/>
        <dbReference type="ChEBI" id="CHEBI:58223"/>
        <dbReference type="ChEBI" id="CHEBI:456216"/>
        <dbReference type="EC" id="2.7.4.22"/>
    </reaction>
</comment>
<comment type="activity regulation">
    <text evidence="1">Inhibited by UTP.</text>
</comment>
<comment type="pathway">
    <text evidence="1">Pyrimidine metabolism; CTP biosynthesis via de novo pathway; UDP from UMP (UMPK route): step 1/1.</text>
</comment>
<comment type="subunit">
    <text evidence="1">Homohexamer.</text>
</comment>
<comment type="subcellular location">
    <subcellularLocation>
        <location evidence="1">Cytoplasm</location>
    </subcellularLocation>
</comment>
<comment type="similarity">
    <text evidence="1">Belongs to the UMP kinase family.</text>
</comment>
<name>PYRH_MYCVP</name>
<protein>
    <recommendedName>
        <fullName evidence="1">Uridylate kinase</fullName>
        <shortName evidence="1">UK</shortName>
        <ecNumber evidence="1">2.7.4.22</ecNumber>
    </recommendedName>
    <alternativeName>
        <fullName evidence="1">Uridine monophosphate kinase</fullName>
        <shortName evidence="1">UMP kinase</shortName>
        <shortName evidence="1">UMPK</shortName>
    </alternativeName>
</protein>
<gene>
    <name evidence="1" type="primary">pyrH</name>
    <name type="ordered locus">Mvan_2220</name>
</gene>
<evidence type="ECO:0000255" key="1">
    <source>
        <dbReference type="HAMAP-Rule" id="MF_01220"/>
    </source>
</evidence>
<reference key="1">
    <citation type="submission" date="2006-12" db="EMBL/GenBank/DDBJ databases">
        <title>Complete sequence of Mycobacterium vanbaalenii PYR-1.</title>
        <authorList>
            <consortium name="US DOE Joint Genome Institute"/>
            <person name="Copeland A."/>
            <person name="Lucas S."/>
            <person name="Lapidus A."/>
            <person name="Barry K."/>
            <person name="Detter J.C."/>
            <person name="Glavina del Rio T."/>
            <person name="Hammon N."/>
            <person name="Israni S."/>
            <person name="Dalin E."/>
            <person name="Tice H."/>
            <person name="Pitluck S."/>
            <person name="Singan V."/>
            <person name="Schmutz J."/>
            <person name="Larimer F."/>
            <person name="Land M."/>
            <person name="Hauser L."/>
            <person name="Kyrpides N."/>
            <person name="Anderson I.J."/>
            <person name="Miller C."/>
            <person name="Richardson P."/>
        </authorList>
    </citation>
    <scope>NUCLEOTIDE SEQUENCE [LARGE SCALE GENOMIC DNA]</scope>
    <source>
        <strain>DSM 7251 / JCM 13017 / BCRC 16820 / KCTC 9966 / NRRL B-24157 / PYR-1</strain>
    </source>
</reference>